<name>GRPE_RHIRD</name>
<evidence type="ECO:0000255" key="1">
    <source>
        <dbReference type="HAMAP-Rule" id="MF_01151"/>
    </source>
</evidence>
<evidence type="ECO:0000256" key="2">
    <source>
        <dbReference type="SAM" id="MobiDB-lite"/>
    </source>
</evidence>
<sequence length="211" mass="22831">MTDDTKKPGPDADVAEEFVDPAQAGEEQAETAEPDPVELLKAENADLRDKFLRLAAEMDNLRRRTERDVKDAKAYSLAGFARDMLAVSDNLRRALEAIPDELKTNGEAGLNGLIEGVEMTERSMLSTLERHGVKKIDAEGQKFDPNFHQAMFEVPNTAVPNNTVLQVIQAGFTIGDRVLRPAMVGVAKGGPKAEPSASAEPGTSSLNEKDA</sequence>
<comment type="function">
    <text evidence="1">Participates actively in the response to hyperosmotic and heat shock by preventing the aggregation of stress-denatured proteins, in association with DnaK and GrpE. It is the nucleotide exchange factor for DnaK and may function as a thermosensor. Unfolded proteins bind initially to DnaJ; upon interaction with the DnaJ-bound protein, DnaK hydrolyzes its bound ATP, resulting in the formation of a stable complex. GrpE releases ADP from DnaK; ATP binding to DnaK triggers the release of the substrate protein, thus completing the reaction cycle. Several rounds of ATP-dependent interactions between DnaJ, DnaK and GrpE are required for fully efficient folding.</text>
</comment>
<comment type="subunit">
    <text evidence="1">Homodimer.</text>
</comment>
<comment type="subcellular location">
    <subcellularLocation>
        <location evidence="1">Cytoplasm</location>
    </subcellularLocation>
</comment>
<comment type="similarity">
    <text evidence="1">Belongs to the GrpE family.</text>
</comment>
<protein>
    <recommendedName>
        <fullName evidence="1">Protein GrpE</fullName>
    </recommendedName>
    <alternativeName>
        <fullName evidence="1">HSP-70 cofactor</fullName>
    </alternativeName>
</protein>
<organism>
    <name type="scientific">Rhizobium radiobacter</name>
    <name type="common">Agrobacterium tumefaciens</name>
    <name type="synonym">Agrobacterium radiobacter</name>
    <dbReference type="NCBI Taxonomy" id="358"/>
    <lineage>
        <taxon>Bacteria</taxon>
        <taxon>Pseudomonadati</taxon>
        <taxon>Pseudomonadota</taxon>
        <taxon>Alphaproteobacteria</taxon>
        <taxon>Hyphomicrobiales</taxon>
        <taxon>Rhizobiaceae</taxon>
        <taxon>Rhizobium/Agrobacterium group</taxon>
        <taxon>Agrobacterium</taxon>
        <taxon>Agrobacterium tumefaciens complex</taxon>
    </lineage>
</organism>
<keyword id="KW-0143">Chaperone</keyword>
<keyword id="KW-0963">Cytoplasm</keyword>
<keyword id="KW-0346">Stress response</keyword>
<proteinExistence type="inferred from homology"/>
<reference key="1">
    <citation type="journal article" date="1999" name="J. Bacteriol.">
        <title>Differential and independent roles of a sigma32 homolog (RpoH) and an HrcA repressor in the heat shock response of Agrobacterium tumefaciens.</title>
        <authorList>
            <person name="Nakahigashi K."/>
            <person name="Ron E.Z."/>
            <person name="Yanagi H."/>
            <person name="Yura T."/>
        </authorList>
    </citation>
    <scope>NUCLEOTIDE SEQUENCE [GENOMIC DNA]</scope>
    <source>
        <strain>GV3101</strain>
    </source>
</reference>
<gene>
    <name evidence="1" type="primary">grpE</name>
</gene>
<feature type="chain" id="PRO_0000113732" description="Protein GrpE">
    <location>
        <begin position="1"/>
        <end position="211"/>
    </location>
</feature>
<feature type="region of interest" description="Disordered" evidence="2">
    <location>
        <begin position="1"/>
        <end position="37"/>
    </location>
</feature>
<feature type="region of interest" description="Disordered" evidence="2">
    <location>
        <begin position="187"/>
        <end position="211"/>
    </location>
</feature>
<feature type="compositionally biased region" description="Basic and acidic residues" evidence="2">
    <location>
        <begin position="1"/>
        <end position="10"/>
    </location>
</feature>
<feature type="compositionally biased region" description="Acidic residues" evidence="2">
    <location>
        <begin position="27"/>
        <end position="36"/>
    </location>
</feature>
<feature type="compositionally biased region" description="Polar residues" evidence="2">
    <location>
        <begin position="201"/>
        <end position="211"/>
    </location>
</feature>
<dbReference type="EMBL" id="AF039940">
    <property type="protein sequence ID" value="AAC18053.1"/>
    <property type="molecule type" value="Genomic_DNA"/>
</dbReference>
<dbReference type="SMR" id="P63188"/>
<dbReference type="eggNOG" id="COG0576">
    <property type="taxonomic scope" value="Bacteria"/>
</dbReference>
<dbReference type="GO" id="GO:0005737">
    <property type="term" value="C:cytoplasm"/>
    <property type="evidence" value="ECO:0007669"/>
    <property type="project" value="UniProtKB-SubCell"/>
</dbReference>
<dbReference type="GO" id="GO:0000774">
    <property type="term" value="F:adenyl-nucleotide exchange factor activity"/>
    <property type="evidence" value="ECO:0007669"/>
    <property type="project" value="InterPro"/>
</dbReference>
<dbReference type="GO" id="GO:0042803">
    <property type="term" value="F:protein homodimerization activity"/>
    <property type="evidence" value="ECO:0007669"/>
    <property type="project" value="InterPro"/>
</dbReference>
<dbReference type="GO" id="GO:0051087">
    <property type="term" value="F:protein-folding chaperone binding"/>
    <property type="evidence" value="ECO:0007669"/>
    <property type="project" value="InterPro"/>
</dbReference>
<dbReference type="GO" id="GO:0051082">
    <property type="term" value="F:unfolded protein binding"/>
    <property type="evidence" value="ECO:0007669"/>
    <property type="project" value="TreeGrafter"/>
</dbReference>
<dbReference type="GO" id="GO:0006457">
    <property type="term" value="P:protein folding"/>
    <property type="evidence" value="ECO:0007669"/>
    <property type="project" value="InterPro"/>
</dbReference>
<dbReference type="CDD" id="cd00446">
    <property type="entry name" value="GrpE"/>
    <property type="match status" value="1"/>
</dbReference>
<dbReference type="FunFam" id="2.30.22.10:FF:000001">
    <property type="entry name" value="Protein GrpE"/>
    <property type="match status" value="1"/>
</dbReference>
<dbReference type="Gene3D" id="3.90.20.20">
    <property type="match status" value="1"/>
</dbReference>
<dbReference type="Gene3D" id="2.30.22.10">
    <property type="entry name" value="Head domain of nucleotide exchange factor GrpE"/>
    <property type="match status" value="1"/>
</dbReference>
<dbReference type="HAMAP" id="MF_01151">
    <property type="entry name" value="GrpE"/>
    <property type="match status" value="1"/>
</dbReference>
<dbReference type="InterPro" id="IPR000740">
    <property type="entry name" value="GrpE"/>
</dbReference>
<dbReference type="InterPro" id="IPR013805">
    <property type="entry name" value="GrpE_coiled_coil"/>
</dbReference>
<dbReference type="InterPro" id="IPR009012">
    <property type="entry name" value="GrpE_head"/>
</dbReference>
<dbReference type="NCBIfam" id="NF010738">
    <property type="entry name" value="PRK14140.1"/>
    <property type="match status" value="1"/>
</dbReference>
<dbReference type="NCBIfam" id="NF010739">
    <property type="entry name" value="PRK14141.1"/>
    <property type="match status" value="1"/>
</dbReference>
<dbReference type="NCBIfam" id="NF010748">
    <property type="entry name" value="PRK14150.1"/>
    <property type="match status" value="1"/>
</dbReference>
<dbReference type="PANTHER" id="PTHR21237">
    <property type="entry name" value="GRPE PROTEIN"/>
    <property type="match status" value="1"/>
</dbReference>
<dbReference type="PANTHER" id="PTHR21237:SF23">
    <property type="entry name" value="GRPE PROTEIN HOMOLOG, MITOCHONDRIAL"/>
    <property type="match status" value="1"/>
</dbReference>
<dbReference type="Pfam" id="PF01025">
    <property type="entry name" value="GrpE"/>
    <property type="match status" value="1"/>
</dbReference>
<dbReference type="PRINTS" id="PR00773">
    <property type="entry name" value="GRPEPROTEIN"/>
</dbReference>
<dbReference type="SUPFAM" id="SSF58014">
    <property type="entry name" value="Coiled-coil domain of nucleotide exchange factor GrpE"/>
    <property type="match status" value="1"/>
</dbReference>
<dbReference type="SUPFAM" id="SSF51064">
    <property type="entry name" value="Head domain of nucleotide exchange factor GrpE"/>
    <property type="match status" value="1"/>
</dbReference>
<dbReference type="PROSITE" id="PS01071">
    <property type="entry name" value="GRPE"/>
    <property type="match status" value="1"/>
</dbReference>
<accession>P63188</accession>
<accession>O68444</accession>